<keyword id="KW-0002">3D-structure</keyword>
<keyword id="KW-0030">Aminoacyl-tRNA synthetase</keyword>
<keyword id="KW-0067">ATP-binding</keyword>
<keyword id="KW-0963">Cytoplasm</keyword>
<keyword id="KW-0436">Ligase</keyword>
<keyword id="KW-0460">Magnesium</keyword>
<keyword id="KW-0479">Metal-binding</keyword>
<keyword id="KW-0547">Nucleotide-binding</keyword>
<keyword id="KW-0648">Protein biosynthesis</keyword>
<proteinExistence type="evidence at protein level"/>
<sequence>MTQNDSMAELKQQALVDINEAQNERELQDVKVKYLGKKGSVSGLMKNMKDLPNEEKPAYGQKVNELRQTIQKELDEKQELLKNEKLNQQLAEETIDVTLPSRQISIGSKHPLTRTVEEIEDLFLGLGYEIVDGYEVEQDYYNFEALNLPKSHPARDMQDSFYITDEILMRTHTSPVQARTMEKRNGQGPVKIICPGKVYRRDSDDATHSHQFTQIEGLVVDKNIKMSDLKGTLELVAKKLFGADREIRLRPSYFPFTEPSVEVDVSCFKCKGKGCNVCKHTGWIEILGAGMVHPNVLEMAGFDSNEYSGFAFGMGPDRIAMLKYGIEDIRYFYTNDVRFLEQFKAVEDRGEA</sequence>
<comment type="catalytic activity">
    <reaction evidence="1">
        <text>tRNA(Phe) + L-phenylalanine + ATP = L-phenylalanyl-tRNA(Phe) + AMP + diphosphate + H(+)</text>
        <dbReference type="Rhea" id="RHEA:19413"/>
        <dbReference type="Rhea" id="RHEA-COMP:9668"/>
        <dbReference type="Rhea" id="RHEA-COMP:9699"/>
        <dbReference type="ChEBI" id="CHEBI:15378"/>
        <dbReference type="ChEBI" id="CHEBI:30616"/>
        <dbReference type="ChEBI" id="CHEBI:33019"/>
        <dbReference type="ChEBI" id="CHEBI:58095"/>
        <dbReference type="ChEBI" id="CHEBI:78442"/>
        <dbReference type="ChEBI" id="CHEBI:78531"/>
        <dbReference type="ChEBI" id="CHEBI:456215"/>
        <dbReference type="EC" id="6.1.1.20"/>
    </reaction>
</comment>
<comment type="cofactor">
    <cofactor evidence="1">
        <name>Mg(2+)</name>
        <dbReference type="ChEBI" id="CHEBI:18420"/>
    </cofactor>
    <text evidence="1">Binds 2 magnesium ions per tetramer.</text>
</comment>
<comment type="subunit">
    <text evidence="1">Tetramer of two alpha and two beta subunits.</text>
</comment>
<comment type="subcellular location">
    <subcellularLocation>
        <location evidence="1">Cytoplasm</location>
    </subcellularLocation>
</comment>
<comment type="similarity">
    <text evidence="1">Belongs to the class-II aminoacyl-tRNA synthetase family. Phe-tRNA synthetase alpha subunit type 1 subfamily.</text>
</comment>
<organism>
    <name type="scientific">Staphylococcus haemolyticus (strain JCSC1435)</name>
    <dbReference type="NCBI Taxonomy" id="279808"/>
    <lineage>
        <taxon>Bacteria</taxon>
        <taxon>Bacillati</taxon>
        <taxon>Bacillota</taxon>
        <taxon>Bacilli</taxon>
        <taxon>Bacillales</taxon>
        <taxon>Staphylococcaceae</taxon>
        <taxon>Staphylococcus</taxon>
    </lineage>
</organism>
<dbReference type="EC" id="6.1.1.20" evidence="1"/>
<dbReference type="EMBL" id="AP006716">
    <property type="protein sequence ID" value="BAE05132.1"/>
    <property type="molecule type" value="Genomic_DNA"/>
</dbReference>
<dbReference type="RefSeq" id="WP_011276100.1">
    <property type="nucleotide sequence ID" value="NC_007168.1"/>
</dbReference>
<dbReference type="PDB" id="2RHQ">
    <property type="method" value="X-ray"/>
    <property type="resolution" value="2.20 A"/>
    <property type="chains" value="A=84-351"/>
</dbReference>
<dbReference type="PDB" id="2RHS">
    <property type="method" value="X-ray"/>
    <property type="resolution" value="2.20 A"/>
    <property type="chains" value="A/C=84-351"/>
</dbReference>
<dbReference type="PDBsum" id="2RHQ"/>
<dbReference type="PDBsum" id="2RHS"/>
<dbReference type="SMR" id="Q4L5E3"/>
<dbReference type="DrugBank" id="DB07817">
    <property type="generic name" value="1-{3-[(4-pyridin-2-ylpiperazin-1-yl)sulfonyl]phenyl}-3-(1,3-thiazol-2-yl)urea"/>
</dbReference>
<dbReference type="GeneID" id="93781191"/>
<dbReference type="KEGG" id="sha:SH1823"/>
<dbReference type="eggNOG" id="COG0016">
    <property type="taxonomic scope" value="Bacteria"/>
</dbReference>
<dbReference type="HOGENOM" id="CLU_025086_0_1_9"/>
<dbReference type="OrthoDB" id="9800719at2"/>
<dbReference type="EvolutionaryTrace" id="Q4L5E3"/>
<dbReference type="Proteomes" id="UP000000543">
    <property type="component" value="Chromosome"/>
</dbReference>
<dbReference type="GO" id="GO:0005737">
    <property type="term" value="C:cytoplasm"/>
    <property type="evidence" value="ECO:0007669"/>
    <property type="project" value="UniProtKB-SubCell"/>
</dbReference>
<dbReference type="GO" id="GO:0005524">
    <property type="term" value="F:ATP binding"/>
    <property type="evidence" value="ECO:0007669"/>
    <property type="project" value="UniProtKB-UniRule"/>
</dbReference>
<dbReference type="GO" id="GO:0140096">
    <property type="term" value="F:catalytic activity, acting on a protein"/>
    <property type="evidence" value="ECO:0007669"/>
    <property type="project" value="UniProtKB-ARBA"/>
</dbReference>
<dbReference type="GO" id="GO:0000287">
    <property type="term" value="F:magnesium ion binding"/>
    <property type="evidence" value="ECO:0007669"/>
    <property type="project" value="UniProtKB-UniRule"/>
</dbReference>
<dbReference type="GO" id="GO:0004826">
    <property type="term" value="F:phenylalanine-tRNA ligase activity"/>
    <property type="evidence" value="ECO:0007669"/>
    <property type="project" value="UniProtKB-UniRule"/>
</dbReference>
<dbReference type="GO" id="GO:0016740">
    <property type="term" value="F:transferase activity"/>
    <property type="evidence" value="ECO:0007669"/>
    <property type="project" value="UniProtKB-ARBA"/>
</dbReference>
<dbReference type="GO" id="GO:0000049">
    <property type="term" value="F:tRNA binding"/>
    <property type="evidence" value="ECO:0007669"/>
    <property type="project" value="InterPro"/>
</dbReference>
<dbReference type="GO" id="GO:0006432">
    <property type="term" value="P:phenylalanyl-tRNA aminoacylation"/>
    <property type="evidence" value="ECO:0007669"/>
    <property type="project" value="UniProtKB-UniRule"/>
</dbReference>
<dbReference type="CDD" id="cd00496">
    <property type="entry name" value="PheRS_alpha_core"/>
    <property type="match status" value="1"/>
</dbReference>
<dbReference type="FunFam" id="3.30.930.10:FF:000003">
    <property type="entry name" value="Phenylalanine--tRNA ligase alpha subunit"/>
    <property type="match status" value="1"/>
</dbReference>
<dbReference type="Gene3D" id="3.30.930.10">
    <property type="entry name" value="Bira Bifunctional Protein, Domain 2"/>
    <property type="match status" value="1"/>
</dbReference>
<dbReference type="HAMAP" id="MF_00281">
    <property type="entry name" value="Phe_tRNA_synth_alpha1"/>
    <property type="match status" value="1"/>
</dbReference>
<dbReference type="InterPro" id="IPR006195">
    <property type="entry name" value="aa-tRNA-synth_II"/>
</dbReference>
<dbReference type="InterPro" id="IPR045864">
    <property type="entry name" value="aa-tRNA-synth_II/BPL/LPL"/>
</dbReference>
<dbReference type="InterPro" id="IPR004529">
    <property type="entry name" value="Phe-tRNA-synth_IIc_asu"/>
</dbReference>
<dbReference type="InterPro" id="IPR004188">
    <property type="entry name" value="Phe-tRNA_ligase_II_N"/>
</dbReference>
<dbReference type="InterPro" id="IPR022911">
    <property type="entry name" value="Phe_tRNA_ligase_alpha1_bac"/>
</dbReference>
<dbReference type="InterPro" id="IPR002319">
    <property type="entry name" value="Phenylalanyl-tRNA_Synthase"/>
</dbReference>
<dbReference type="InterPro" id="IPR010978">
    <property type="entry name" value="tRNA-bd_arm"/>
</dbReference>
<dbReference type="NCBIfam" id="TIGR00468">
    <property type="entry name" value="pheS"/>
    <property type="match status" value="1"/>
</dbReference>
<dbReference type="PANTHER" id="PTHR11538:SF41">
    <property type="entry name" value="PHENYLALANINE--TRNA LIGASE, MITOCHONDRIAL"/>
    <property type="match status" value="1"/>
</dbReference>
<dbReference type="PANTHER" id="PTHR11538">
    <property type="entry name" value="PHENYLALANYL-TRNA SYNTHETASE"/>
    <property type="match status" value="1"/>
</dbReference>
<dbReference type="Pfam" id="PF02912">
    <property type="entry name" value="Phe_tRNA-synt_N"/>
    <property type="match status" value="1"/>
</dbReference>
<dbReference type="Pfam" id="PF01409">
    <property type="entry name" value="tRNA-synt_2d"/>
    <property type="match status" value="1"/>
</dbReference>
<dbReference type="SUPFAM" id="SSF55681">
    <property type="entry name" value="Class II aaRS and biotin synthetases"/>
    <property type="match status" value="1"/>
</dbReference>
<dbReference type="SUPFAM" id="SSF46589">
    <property type="entry name" value="tRNA-binding arm"/>
    <property type="match status" value="1"/>
</dbReference>
<dbReference type="PROSITE" id="PS50862">
    <property type="entry name" value="AA_TRNA_LIGASE_II"/>
    <property type="match status" value="1"/>
</dbReference>
<feature type="chain" id="PRO_0000232028" description="Phenylalanine--tRNA ligase alpha subunit">
    <location>
        <begin position="1"/>
        <end position="352"/>
    </location>
</feature>
<feature type="binding site" evidence="1">
    <location>
        <position position="258"/>
    </location>
    <ligand>
        <name>Mg(2+)</name>
        <dbReference type="ChEBI" id="CHEBI:18420"/>
        <note>shared with beta subunit</note>
    </ligand>
</feature>
<feature type="helix" evidence="2">
    <location>
        <begin position="85"/>
        <end position="89"/>
    </location>
</feature>
<feature type="turn" evidence="2">
    <location>
        <begin position="90"/>
        <end position="93"/>
    </location>
</feature>
<feature type="helix" evidence="2">
    <location>
        <begin position="111"/>
        <end position="124"/>
    </location>
</feature>
<feature type="turn" evidence="2">
    <location>
        <begin position="125"/>
        <end position="127"/>
    </location>
</feature>
<feature type="strand" evidence="2">
    <location>
        <begin position="135"/>
        <end position="138"/>
    </location>
</feature>
<feature type="helix" evidence="2">
    <location>
        <begin position="139"/>
        <end position="142"/>
    </location>
</feature>
<feature type="helix" evidence="2">
    <location>
        <begin position="144"/>
        <end position="146"/>
    </location>
</feature>
<feature type="helix" evidence="2">
    <location>
        <begin position="153"/>
        <end position="155"/>
    </location>
</feature>
<feature type="turn" evidence="2">
    <location>
        <begin position="157"/>
        <end position="159"/>
    </location>
</feature>
<feature type="strand" evidence="2">
    <location>
        <begin position="162"/>
        <end position="169"/>
    </location>
</feature>
<feature type="strand" evidence="2">
    <location>
        <begin position="171"/>
        <end position="173"/>
    </location>
</feature>
<feature type="helix" evidence="2">
    <location>
        <begin position="174"/>
        <end position="183"/>
    </location>
</feature>
<feature type="turn" evidence="2">
    <location>
        <begin position="184"/>
        <end position="186"/>
    </location>
</feature>
<feature type="strand" evidence="2">
    <location>
        <begin position="190"/>
        <end position="199"/>
    </location>
</feature>
<feature type="strand" evidence="2">
    <location>
        <begin position="210"/>
        <end position="223"/>
    </location>
</feature>
<feature type="helix" evidence="2">
    <location>
        <begin position="226"/>
        <end position="241"/>
    </location>
</feature>
<feature type="strand" evidence="2">
    <location>
        <begin position="247"/>
        <end position="251"/>
    </location>
</feature>
<feature type="strand" evidence="2">
    <location>
        <begin position="257"/>
        <end position="266"/>
    </location>
</feature>
<feature type="strand" evidence="2">
    <location>
        <begin position="268"/>
        <end position="270"/>
    </location>
</feature>
<feature type="strand" evidence="3">
    <location>
        <begin position="271"/>
        <end position="273"/>
    </location>
</feature>
<feature type="turn" evidence="2">
    <location>
        <begin position="276"/>
        <end position="280"/>
    </location>
</feature>
<feature type="strand" evidence="2">
    <location>
        <begin position="281"/>
        <end position="292"/>
    </location>
</feature>
<feature type="helix" evidence="2">
    <location>
        <begin position="294"/>
        <end position="298"/>
    </location>
</feature>
<feature type="turn" evidence="2">
    <location>
        <begin position="299"/>
        <end position="301"/>
    </location>
</feature>
<feature type="turn" evidence="2">
    <location>
        <begin position="304"/>
        <end position="306"/>
    </location>
</feature>
<feature type="strand" evidence="2">
    <location>
        <begin position="308"/>
        <end position="314"/>
    </location>
</feature>
<feature type="helix" evidence="2">
    <location>
        <begin position="316"/>
        <end position="324"/>
    </location>
</feature>
<feature type="helix" evidence="2">
    <location>
        <begin position="331"/>
        <end position="334"/>
    </location>
</feature>
<feature type="helix" evidence="2">
    <location>
        <begin position="337"/>
        <end position="340"/>
    </location>
</feature>
<feature type="helix" evidence="3">
    <location>
        <begin position="341"/>
        <end position="343"/>
    </location>
</feature>
<name>SYFA_STAHJ</name>
<gene>
    <name evidence="1" type="primary">pheS</name>
    <name type="ordered locus">SH1823</name>
</gene>
<evidence type="ECO:0000255" key="1">
    <source>
        <dbReference type="HAMAP-Rule" id="MF_00281"/>
    </source>
</evidence>
<evidence type="ECO:0007829" key="2">
    <source>
        <dbReference type="PDB" id="2RHQ"/>
    </source>
</evidence>
<evidence type="ECO:0007829" key="3">
    <source>
        <dbReference type="PDB" id="2RHS"/>
    </source>
</evidence>
<protein>
    <recommendedName>
        <fullName evidence="1">Phenylalanine--tRNA ligase alpha subunit</fullName>
        <ecNumber evidence="1">6.1.1.20</ecNumber>
    </recommendedName>
    <alternativeName>
        <fullName evidence="1">Phenylalanyl-tRNA synthetase alpha subunit</fullName>
        <shortName evidence="1">PheRS</shortName>
    </alternativeName>
</protein>
<accession>Q4L5E3</accession>
<reference key="1">
    <citation type="journal article" date="2005" name="J. Bacteriol.">
        <title>Whole-genome sequencing of Staphylococcus haemolyticus uncovers the extreme plasticity of its genome and the evolution of human-colonizing staphylococcal species.</title>
        <authorList>
            <person name="Takeuchi F."/>
            <person name="Watanabe S."/>
            <person name="Baba T."/>
            <person name="Yuzawa H."/>
            <person name="Ito T."/>
            <person name="Morimoto Y."/>
            <person name="Kuroda M."/>
            <person name="Cui L."/>
            <person name="Takahashi M."/>
            <person name="Ankai A."/>
            <person name="Baba S."/>
            <person name="Fukui S."/>
            <person name="Lee J.C."/>
            <person name="Hiramatsu K."/>
        </authorList>
    </citation>
    <scope>NUCLEOTIDE SEQUENCE [LARGE SCALE GENOMIC DNA]</scope>
    <source>
        <strain>JCSC1435</strain>
    </source>
</reference>